<dbReference type="EMBL" id="Z74907">
    <property type="status" value="NOT_ANNOTATED_CDS"/>
    <property type="molecule type" value="Genomic_DNA"/>
</dbReference>
<dbReference type="EMBL" id="BK006948">
    <property type="protein sequence ID" value="DAA10621.1"/>
    <property type="molecule type" value="Genomic_DNA"/>
</dbReference>
<dbReference type="RefSeq" id="NP_878161.1">
    <property type="nucleotide sequence ID" value="NM_001184575.1"/>
</dbReference>
<dbReference type="BioGRID" id="37015">
    <property type="interactions" value="45"/>
</dbReference>
<dbReference type="FunCoup" id="Q3E7A5">
    <property type="interactions" value="7"/>
</dbReference>
<dbReference type="STRING" id="4932.YOL164W-A"/>
<dbReference type="PaxDb" id="4932-YOL164W-A"/>
<dbReference type="EnsemblFungi" id="YOL164W-A_mRNA">
    <property type="protein sequence ID" value="YOL164W-A"/>
    <property type="gene ID" value="YOL164W-A"/>
</dbReference>
<dbReference type="GeneID" id="1466473"/>
<dbReference type="KEGG" id="sce:YOL164W-A"/>
<dbReference type="AGR" id="SGD:S000028580"/>
<dbReference type="SGD" id="S000028580">
    <property type="gene designation" value="YOL164W-A"/>
</dbReference>
<dbReference type="VEuPathDB" id="FungiDB:YOL164W-A"/>
<dbReference type="HOGENOM" id="CLU_2943626_0_0_1"/>
<dbReference type="InParanoid" id="Q3E7A5"/>
<dbReference type="OrthoDB" id="10272174at2759"/>
<dbReference type="BioCyc" id="YEAST:G3O-33900-MONOMER"/>
<dbReference type="BioGRID-ORCS" id="1466473">
    <property type="hits" value="0 hits in 10 CRISPR screens"/>
</dbReference>
<dbReference type="PRO" id="PR:Q3E7A5"/>
<dbReference type="Proteomes" id="UP000002311">
    <property type="component" value="Chromosome XV"/>
</dbReference>
<dbReference type="RNAct" id="Q3E7A5">
    <property type="molecule type" value="protein"/>
</dbReference>
<feature type="chain" id="PRO_0000245278" description="Uncharacterized protein YOL164W-A">
    <location>
        <begin position="1"/>
        <end position="60"/>
    </location>
</feature>
<keyword id="KW-1185">Reference proteome</keyword>
<sequence>MFAKLYRGLTYVTNKILSTLLSHHSIHYCINSFKPTTLAIIILLHPCCRCNVYIIRCIHH</sequence>
<reference key="1">
    <citation type="journal article" date="1997" name="Nature">
        <title>The nucleotide sequence of Saccharomyces cerevisiae chromosome XV.</title>
        <authorList>
            <person name="Dujon B."/>
            <person name="Albermann K."/>
            <person name="Aldea M."/>
            <person name="Alexandraki D."/>
            <person name="Ansorge W."/>
            <person name="Arino J."/>
            <person name="Benes V."/>
            <person name="Bohn C."/>
            <person name="Bolotin-Fukuhara M."/>
            <person name="Bordonne R."/>
            <person name="Boyer J."/>
            <person name="Camasses A."/>
            <person name="Casamayor A."/>
            <person name="Casas C."/>
            <person name="Cheret G."/>
            <person name="Cziepluch C."/>
            <person name="Daignan-Fornier B."/>
            <person name="Dang V.-D."/>
            <person name="de Haan M."/>
            <person name="Delius H."/>
            <person name="Durand P."/>
            <person name="Fairhead C."/>
            <person name="Feldmann H."/>
            <person name="Gaillon L."/>
            <person name="Galisson F."/>
            <person name="Gamo F.-J."/>
            <person name="Gancedo C."/>
            <person name="Goffeau A."/>
            <person name="Goulding S.E."/>
            <person name="Grivell L.A."/>
            <person name="Habbig B."/>
            <person name="Hand N.J."/>
            <person name="Hani J."/>
            <person name="Hattenhorst U."/>
            <person name="Hebling U."/>
            <person name="Hernando Y."/>
            <person name="Herrero E."/>
            <person name="Heumann K."/>
            <person name="Hiesel R."/>
            <person name="Hilger F."/>
            <person name="Hofmann B."/>
            <person name="Hollenberg C.P."/>
            <person name="Hughes B."/>
            <person name="Jauniaux J.-C."/>
            <person name="Kalogeropoulos A."/>
            <person name="Katsoulou C."/>
            <person name="Kordes E."/>
            <person name="Lafuente M.J."/>
            <person name="Landt O."/>
            <person name="Louis E.J."/>
            <person name="Maarse A.C."/>
            <person name="Madania A."/>
            <person name="Mannhaupt G."/>
            <person name="Marck C."/>
            <person name="Martin R.P."/>
            <person name="Mewes H.-W."/>
            <person name="Michaux G."/>
            <person name="Paces V."/>
            <person name="Parle-McDermott A.G."/>
            <person name="Pearson B.M."/>
            <person name="Perrin A."/>
            <person name="Pettersson B."/>
            <person name="Poch O."/>
            <person name="Pohl T.M."/>
            <person name="Poirey R."/>
            <person name="Portetelle D."/>
            <person name="Pujol A."/>
            <person name="Purnelle B."/>
            <person name="Ramezani Rad M."/>
            <person name="Rechmann S."/>
            <person name="Schwager C."/>
            <person name="Schweizer M."/>
            <person name="Sor F."/>
            <person name="Sterky F."/>
            <person name="Tarassov I.A."/>
            <person name="Teodoru C."/>
            <person name="Tettelin H."/>
            <person name="Thierry A."/>
            <person name="Tobiasch E."/>
            <person name="Tzermia M."/>
            <person name="Uhlen M."/>
            <person name="Unseld M."/>
            <person name="Valens M."/>
            <person name="Vandenbol M."/>
            <person name="Vetter I."/>
            <person name="Vlcek C."/>
            <person name="Voet M."/>
            <person name="Volckaert G."/>
            <person name="Voss H."/>
            <person name="Wambutt R."/>
            <person name="Wedler H."/>
            <person name="Wiemann S."/>
            <person name="Winsor B."/>
            <person name="Wolfe K.H."/>
            <person name="Zollner A."/>
            <person name="Zumstein E."/>
            <person name="Kleine K."/>
        </authorList>
    </citation>
    <scope>NUCLEOTIDE SEQUENCE [LARGE SCALE GENOMIC DNA]</scope>
    <source>
        <strain>ATCC 204508 / S288c</strain>
    </source>
</reference>
<reference key="2">
    <citation type="journal article" date="2014" name="G3 (Bethesda)">
        <title>The reference genome sequence of Saccharomyces cerevisiae: Then and now.</title>
        <authorList>
            <person name="Engel S.R."/>
            <person name="Dietrich F.S."/>
            <person name="Fisk D.G."/>
            <person name="Binkley G."/>
            <person name="Balakrishnan R."/>
            <person name="Costanzo M.C."/>
            <person name="Dwight S.S."/>
            <person name="Hitz B.C."/>
            <person name="Karra K."/>
            <person name="Nash R.S."/>
            <person name="Weng S."/>
            <person name="Wong E.D."/>
            <person name="Lloyd P."/>
            <person name="Skrzypek M.S."/>
            <person name="Miyasato S.R."/>
            <person name="Simison M."/>
            <person name="Cherry J.M."/>
        </authorList>
    </citation>
    <scope>GENOME REANNOTATION</scope>
    <source>
        <strain>ATCC 204508 / S288c</strain>
    </source>
</reference>
<reference key="3">
    <citation type="journal article" date="2003" name="Genome Res.">
        <title>Systematic discovery of new genes in the Saccharomyces cerevisiae genome.</title>
        <authorList>
            <person name="Kessler M.M."/>
            <person name="Zeng Q."/>
            <person name="Hogan S."/>
            <person name="Cook R."/>
            <person name="Morales A.J."/>
            <person name="Cottarel G."/>
        </authorList>
    </citation>
    <scope>GENOME REANNOTATION</scope>
</reference>
<proteinExistence type="predicted"/>
<organism>
    <name type="scientific">Saccharomyces cerevisiae (strain ATCC 204508 / S288c)</name>
    <name type="common">Baker's yeast</name>
    <dbReference type="NCBI Taxonomy" id="559292"/>
    <lineage>
        <taxon>Eukaryota</taxon>
        <taxon>Fungi</taxon>
        <taxon>Dikarya</taxon>
        <taxon>Ascomycota</taxon>
        <taxon>Saccharomycotina</taxon>
        <taxon>Saccharomycetes</taxon>
        <taxon>Saccharomycetales</taxon>
        <taxon>Saccharomycetaceae</taxon>
        <taxon>Saccharomyces</taxon>
    </lineage>
</organism>
<gene>
    <name type="ordered locus">YOL164W-A</name>
</gene>
<name>YO16W_YEAST</name>
<accession>Q3E7A5</accession>
<accession>D6W1Q5</accession>
<protein>
    <recommendedName>
        <fullName>Uncharacterized protein YOL164W-A</fullName>
    </recommendedName>
</protein>